<evidence type="ECO:0000250" key="1"/>
<evidence type="ECO:0000255" key="2"/>
<evidence type="ECO:0000305" key="3"/>
<organism>
    <name type="scientific">Aspergillus fumigatus (strain CBS 144.89 / FGSC A1163 / CEA10)</name>
    <name type="common">Neosartorya fumigata</name>
    <dbReference type="NCBI Taxonomy" id="451804"/>
    <lineage>
        <taxon>Eukaryota</taxon>
        <taxon>Fungi</taxon>
        <taxon>Dikarya</taxon>
        <taxon>Ascomycota</taxon>
        <taxon>Pezizomycotina</taxon>
        <taxon>Eurotiomycetes</taxon>
        <taxon>Eurotiomycetidae</taxon>
        <taxon>Eurotiales</taxon>
        <taxon>Aspergillaceae</taxon>
        <taxon>Aspergillus</taxon>
        <taxon>Aspergillus subgen. Fumigati</taxon>
    </lineage>
</organism>
<protein>
    <recommendedName>
        <fullName>Beta-mannosidase B</fullName>
        <ecNumber>3.2.1.25</ecNumber>
    </recommendedName>
    <alternativeName>
        <fullName>Mannanase B</fullName>
        <shortName>Mannase B</shortName>
    </alternativeName>
</protein>
<sequence>MSKLQQFPLSKGWSFRDNEATSEDAWMPVPVVPSVVHQDLQANNKLKDPYIGFNELEARWVNEKSWTYKTVFQKPAAPAGSCIVLAFDGLDTFAKVKLDGNVILENDNMFLARRVDVTKALEAEGDHVLEIDFDCAFLRAKELRKQDPRHNWASFNGDPSRLSVRKAQYHWGWDWGPVLMTAGIWREVRLEVYSARVADLWTEVQLASDHQSAQVTAFVEVESVHSGSHRACFTLSLHGQEITREEIGVTENGTAKATFDVKEPSLWWPHGYGDATLYEVSVSLVKEQEELHRVSKKFGIRTAEVIQRPDKHGKSFFFRVNGVDIFCGGSCWIPADNLLPSITAERYRKWIELMVHGRQVMIRVWGGGIYEDYSFYDACDELGVLVWQDFMFGCGNYPTWPNLLESIRKESVYNVRRLRHHPSIVIWVGNNEDYQVQEQAGLTYNYEDKDPENWLKTDFPARYIYEKLLPEVVQEYSPGTFYHPGSPWGDGKTTSDPTVGDMHQWNVWHGTQEKYQIFDTLGGRFNSEFGMEAFPHMSTIDYFVENEADKYPQSHVLDFHNKADGHERRIATYLVENLRTATDLETHIYLTQVVQAETMMFGYRGWRRQWGDERHCGGALLWQLNDCWPTISWAIVDYFLRPKPAFYAVARVLNPIAVGVRREHHDWSVTHAQPPKTSKFELWVASSRQQEIQGTVELRFLSVNTGLEVRERIVHENVSIVPNGTTNLIVDGLIDHTVHSEPHVLAARIWVDGQLVARDVDWPQPFKYLDLSDRGLEVKKISESEDEQTLLISTKKPVKCLVFEEREGVRISDSAMDIVPGDDQRVTIKGLKPGDAPLKYKFLGQ</sequence>
<comment type="function">
    <text evidence="1">Exoglycosidase that cleaves the single beta-linked mannose residue from the non-reducing end of beta-mannosidic oligosaccharides of various complexity and length. Prefers mannobiose over mannotriose and has no activity against polymeric mannan. Is also severely restricted by galactosyl substitutions at the +1 subsite (By similarity).</text>
</comment>
<comment type="catalytic activity">
    <reaction>
        <text>Hydrolysis of terminal, non-reducing beta-D-mannose residues in beta-D-mannosides.</text>
        <dbReference type="EC" id="3.2.1.25"/>
    </reaction>
</comment>
<comment type="pathway">
    <text>Glycan metabolism; N-glycan degradation.</text>
</comment>
<comment type="miscellaneous">
    <text evidence="1">In contrast to clade A beta-mannosidases, which are likely secreted, clade B proteins appear to be intracellular.</text>
</comment>
<comment type="similarity">
    <text evidence="3">Belongs to the glycosyl hydrolase 2 family. Beta-mannosidase B subfamily.</text>
</comment>
<keyword id="KW-0119">Carbohydrate metabolism</keyword>
<keyword id="KW-0325">Glycoprotein</keyword>
<keyword id="KW-0326">Glycosidase</keyword>
<keyword id="KW-0378">Hydrolase</keyword>
<keyword id="KW-0624">Polysaccharide degradation</keyword>
<feature type="chain" id="PRO_0000394652" description="Beta-mannosidase B">
    <location>
        <begin position="1"/>
        <end position="845"/>
    </location>
</feature>
<feature type="active site" description="Proton donor" evidence="1">
    <location>
        <position position="432"/>
    </location>
</feature>
<feature type="glycosylation site" description="N-linked (GlcNAc...) asparagine" evidence="2">
    <location>
        <position position="252"/>
    </location>
</feature>
<feature type="glycosylation site" description="N-linked (GlcNAc...) asparagine" evidence="2">
    <location>
        <position position="717"/>
    </location>
</feature>
<feature type="glycosylation site" description="N-linked (GlcNAc...) asparagine" evidence="2">
    <location>
        <position position="723"/>
    </location>
</feature>
<proteinExistence type="inferred from homology"/>
<name>MANBB_ASPFC</name>
<gene>
    <name type="primary">mndB</name>
    <name type="ORF">AFUB_087900</name>
</gene>
<accession>B0YBU9</accession>
<dbReference type="EC" id="3.2.1.25"/>
<dbReference type="EMBL" id="DS499601">
    <property type="protein sequence ID" value="EDP48080.1"/>
    <property type="molecule type" value="Genomic_DNA"/>
</dbReference>
<dbReference type="SMR" id="B0YBU9"/>
<dbReference type="GlyCosmos" id="B0YBU9">
    <property type="glycosylation" value="3 sites, No reported glycans"/>
</dbReference>
<dbReference type="EnsemblFungi" id="EDP48080">
    <property type="protein sequence ID" value="EDP48080"/>
    <property type="gene ID" value="AFUB_087900"/>
</dbReference>
<dbReference type="VEuPathDB" id="FungiDB:AFUB_087900"/>
<dbReference type="HOGENOM" id="CLU_005015_1_0_1"/>
<dbReference type="OrthoDB" id="39946at5052"/>
<dbReference type="PhylomeDB" id="B0YBU9"/>
<dbReference type="UniPathway" id="UPA00280"/>
<dbReference type="Proteomes" id="UP000001699">
    <property type="component" value="Unassembled WGS sequence"/>
</dbReference>
<dbReference type="GO" id="GO:0004567">
    <property type="term" value="F:beta-mannosidase activity"/>
    <property type="evidence" value="ECO:0007669"/>
    <property type="project" value="UniProtKB-EC"/>
</dbReference>
<dbReference type="GO" id="GO:0006516">
    <property type="term" value="P:glycoprotein catabolic process"/>
    <property type="evidence" value="ECO:0007669"/>
    <property type="project" value="TreeGrafter"/>
</dbReference>
<dbReference type="GO" id="GO:0000272">
    <property type="term" value="P:polysaccharide catabolic process"/>
    <property type="evidence" value="ECO:0007669"/>
    <property type="project" value="UniProtKB-KW"/>
</dbReference>
<dbReference type="FunFam" id="2.60.120.260:FF:000118">
    <property type="entry name" value="Beta-mannosidase B"/>
    <property type="match status" value="1"/>
</dbReference>
<dbReference type="FunFam" id="3.20.20.80:FF:000050">
    <property type="entry name" value="Beta-mannosidase B"/>
    <property type="match status" value="1"/>
</dbReference>
<dbReference type="FunFam" id="2.60.40.10:FF:001725">
    <property type="entry name" value="Exo-beta-D-glucosaminidase"/>
    <property type="match status" value="1"/>
</dbReference>
<dbReference type="Gene3D" id="2.60.120.260">
    <property type="entry name" value="Galactose-binding domain-like"/>
    <property type="match status" value="1"/>
</dbReference>
<dbReference type="Gene3D" id="3.20.20.80">
    <property type="entry name" value="Glycosidases"/>
    <property type="match status" value="1"/>
</dbReference>
<dbReference type="Gene3D" id="2.60.40.10">
    <property type="entry name" value="Immunoglobulins"/>
    <property type="match status" value="1"/>
</dbReference>
<dbReference type="InterPro" id="IPR036156">
    <property type="entry name" value="Beta-gal/glucu_dom_sf"/>
</dbReference>
<dbReference type="InterPro" id="IPR054593">
    <property type="entry name" value="Beta-mannosidase-like_N2"/>
</dbReference>
<dbReference type="InterPro" id="IPR050887">
    <property type="entry name" value="Beta-mannosidase_GH2"/>
</dbReference>
<dbReference type="InterPro" id="IPR008979">
    <property type="entry name" value="Galactose-bd-like_sf"/>
</dbReference>
<dbReference type="InterPro" id="IPR006102">
    <property type="entry name" value="Glyco_hydro_2_Ig-like"/>
</dbReference>
<dbReference type="InterPro" id="IPR017853">
    <property type="entry name" value="Glycoside_hydrolase_SF"/>
</dbReference>
<dbReference type="InterPro" id="IPR013783">
    <property type="entry name" value="Ig-like_fold"/>
</dbReference>
<dbReference type="InterPro" id="IPR041447">
    <property type="entry name" value="Mannosidase_ig"/>
</dbReference>
<dbReference type="PANTHER" id="PTHR43730">
    <property type="entry name" value="BETA-MANNOSIDASE"/>
    <property type="match status" value="1"/>
</dbReference>
<dbReference type="PANTHER" id="PTHR43730:SF1">
    <property type="entry name" value="BETA-MANNOSIDASE"/>
    <property type="match status" value="1"/>
</dbReference>
<dbReference type="Pfam" id="PF00703">
    <property type="entry name" value="Glyco_hydro_2"/>
    <property type="match status" value="1"/>
</dbReference>
<dbReference type="Pfam" id="PF22666">
    <property type="entry name" value="Glyco_hydro_2_N2"/>
    <property type="match status" value="1"/>
</dbReference>
<dbReference type="Pfam" id="PF17786">
    <property type="entry name" value="Mannosidase_ig"/>
    <property type="match status" value="1"/>
</dbReference>
<dbReference type="SUPFAM" id="SSF51445">
    <property type="entry name" value="(Trans)glycosidases"/>
    <property type="match status" value="1"/>
</dbReference>
<dbReference type="SUPFAM" id="SSF49303">
    <property type="entry name" value="beta-Galactosidase/glucuronidase domain"/>
    <property type="match status" value="2"/>
</dbReference>
<dbReference type="SUPFAM" id="SSF49785">
    <property type="entry name" value="Galactose-binding domain-like"/>
    <property type="match status" value="1"/>
</dbReference>
<reference key="1">
    <citation type="journal article" date="2008" name="PLoS Genet.">
        <title>Genomic islands in the pathogenic filamentous fungus Aspergillus fumigatus.</title>
        <authorList>
            <person name="Fedorova N.D."/>
            <person name="Khaldi N."/>
            <person name="Joardar V.S."/>
            <person name="Maiti R."/>
            <person name="Amedeo P."/>
            <person name="Anderson M.J."/>
            <person name="Crabtree J."/>
            <person name="Silva J.C."/>
            <person name="Badger J.H."/>
            <person name="Albarraq A."/>
            <person name="Angiuoli S."/>
            <person name="Bussey H."/>
            <person name="Bowyer P."/>
            <person name="Cotty P.J."/>
            <person name="Dyer P.S."/>
            <person name="Egan A."/>
            <person name="Galens K."/>
            <person name="Fraser-Liggett C.M."/>
            <person name="Haas B.J."/>
            <person name="Inman J.M."/>
            <person name="Kent R."/>
            <person name="Lemieux S."/>
            <person name="Malavazi I."/>
            <person name="Orvis J."/>
            <person name="Roemer T."/>
            <person name="Ronning C.M."/>
            <person name="Sundaram J.P."/>
            <person name="Sutton G."/>
            <person name="Turner G."/>
            <person name="Venter J.C."/>
            <person name="White O.R."/>
            <person name="Whitty B.R."/>
            <person name="Youngman P."/>
            <person name="Wolfe K.H."/>
            <person name="Goldman G.H."/>
            <person name="Wortman J.R."/>
            <person name="Jiang B."/>
            <person name="Denning D.W."/>
            <person name="Nierman W.C."/>
        </authorList>
    </citation>
    <scope>NUCLEOTIDE SEQUENCE [LARGE SCALE GENOMIC DNA]</scope>
    <source>
        <strain>CBS 144.89 / FGSC A1163 / CEA10</strain>
    </source>
</reference>